<sequence>MSIKEQTLMTPYLQFDRNQWAALRDSVPMTLSEDEIARLKGINEDLSLEEVAEIYLPLSRLLNFYISSNLRRQAVLEQFLGTNGQRIPYIISIAGSVAVGKSTTARVLQALLSRWPEHRRVELITTDGFLHPNQVLKERGLMKKKGFPESYDMHRLVKFVSDLKSGVPNVTAPVYSHLIYDVIPDGDKTVVQPDILILEGLNVLQSGMDYPHDPHHVFVSDFVDFSIYVDAPEDLLQTWYINRFLKFREGAFTDPDSYFHNYAKLTKEEAIKTAMTLWKEINWLNLKQNILPTRERASLILTKSANHAVEEVRLRK</sequence>
<dbReference type="EC" id="2.7.1.33" evidence="1"/>
<dbReference type="EMBL" id="CP000038">
    <property type="protein sequence ID" value="AAZ90656.1"/>
    <property type="molecule type" value="Genomic_DNA"/>
</dbReference>
<dbReference type="RefSeq" id="WP_000023081.1">
    <property type="nucleotide sequence ID" value="NC_007384.1"/>
</dbReference>
<dbReference type="SMR" id="Q3YV06"/>
<dbReference type="GeneID" id="93777919"/>
<dbReference type="KEGG" id="ssn:SSON_4147"/>
<dbReference type="HOGENOM" id="CLU_053818_1_1_6"/>
<dbReference type="UniPathway" id="UPA00241">
    <property type="reaction ID" value="UER00352"/>
</dbReference>
<dbReference type="Proteomes" id="UP000002529">
    <property type="component" value="Chromosome"/>
</dbReference>
<dbReference type="GO" id="GO:0005737">
    <property type="term" value="C:cytoplasm"/>
    <property type="evidence" value="ECO:0007669"/>
    <property type="project" value="UniProtKB-SubCell"/>
</dbReference>
<dbReference type="GO" id="GO:0005524">
    <property type="term" value="F:ATP binding"/>
    <property type="evidence" value="ECO:0007669"/>
    <property type="project" value="UniProtKB-UniRule"/>
</dbReference>
<dbReference type="GO" id="GO:0004594">
    <property type="term" value="F:pantothenate kinase activity"/>
    <property type="evidence" value="ECO:0007669"/>
    <property type="project" value="UniProtKB-UniRule"/>
</dbReference>
<dbReference type="GO" id="GO:0015937">
    <property type="term" value="P:coenzyme A biosynthetic process"/>
    <property type="evidence" value="ECO:0007669"/>
    <property type="project" value="UniProtKB-UniRule"/>
</dbReference>
<dbReference type="CDD" id="cd02025">
    <property type="entry name" value="PanK"/>
    <property type="match status" value="1"/>
</dbReference>
<dbReference type="FunFam" id="3.40.50.300:FF:000242">
    <property type="entry name" value="Pantothenate kinase"/>
    <property type="match status" value="1"/>
</dbReference>
<dbReference type="Gene3D" id="3.40.50.300">
    <property type="entry name" value="P-loop containing nucleotide triphosphate hydrolases"/>
    <property type="match status" value="1"/>
</dbReference>
<dbReference type="HAMAP" id="MF_00215">
    <property type="entry name" value="Pantothen_kinase_1"/>
    <property type="match status" value="1"/>
</dbReference>
<dbReference type="InterPro" id="IPR027417">
    <property type="entry name" value="P-loop_NTPase"/>
</dbReference>
<dbReference type="InterPro" id="IPR004566">
    <property type="entry name" value="PanK"/>
</dbReference>
<dbReference type="InterPro" id="IPR006083">
    <property type="entry name" value="PRK/URK"/>
</dbReference>
<dbReference type="NCBIfam" id="TIGR00554">
    <property type="entry name" value="panK_bact"/>
    <property type="match status" value="1"/>
</dbReference>
<dbReference type="PANTHER" id="PTHR10285">
    <property type="entry name" value="URIDINE KINASE"/>
    <property type="match status" value="1"/>
</dbReference>
<dbReference type="Pfam" id="PF00485">
    <property type="entry name" value="PRK"/>
    <property type="match status" value="1"/>
</dbReference>
<dbReference type="PIRSF" id="PIRSF000545">
    <property type="entry name" value="Pantothenate_kin"/>
    <property type="match status" value="1"/>
</dbReference>
<dbReference type="SUPFAM" id="SSF52540">
    <property type="entry name" value="P-loop containing nucleoside triphosphate hydrolases"/>
    <property type="match status" value="1"/>
</dbReference>
<evidence type="ECO:0000255" key="1">
    <source>
        <dbReference type="HAMAP-Rule" id="MF_00215"/>
    </source>
</evidence>
<feature type="chain" id="PRO_1000043259" description="Pantothenate kinase">
    <location>
        <begin position="1"/>
        <end position="316"/>
    </location>
</feature>
<feature type="binding site" evidence="1">
    <location>
        <begin position="95"/>
        <end position="102"/>
    </location>
    <ligand>
        <name>ATP</name>
        <dbReference type="ChEBI" id="CHEBI:30616"/>
    </ligand>
</feature>
<organism>
    <name type="scientific">Shigella sonnei (strain Ss046)</name>
    <dbReference type="NCBI Taxonomy" id="300269"/>
    <lineage>
        <taxon>Bacteria</taxon>
        <taxon>Pseudomonadati</taxon>
        <taxon>Pseudomonadota</taxon>
        <taxon>Gammaproteobacteria</taxon>
        <taxon>Enterobacterales</taxon>
        <taxon>Enterobacteriaceae</taxon>
        <taxon>Shigella</taxon>
    </lineage>
</organism>
<proteinExistence type="inferred from homology"/>
<accession>Q3YV06</accession>
<comment type="catalytic activity">
    <reaction evidence="1">
        <text>(R)-pantothenate + ATP = (R)-4'-phosphopantothenate + ADP + H(+)</text>
        <dbReference type="Rhea" id="RHEA:16373"/>
        <dbReference type="ChEBI" id="CHEBI:10986"/>
        <dbReference type="ChEBI" id="CHEBI:15378"/>
        <dbReference type="ChEBI" id="CHEBI:29032"/>
        <dbReference type="ChEBI" id="CHEBI:30616"/>
        <dbReference type="ChEBI" id="CHEBI:456216"/>
        <dbReference type="EC" id="2.7.1.33"/>
    </reaction>
</comment>
<comment type="pathway">
    <text evidence="1">Cofactor biosynthesis; coenzyme A biosynthesis; CoA from (R)-pantothenate: step 1/5.</text>
</comment>
<comment type="subcellular location">
    <subcellularLocation>
        <location evidence="1">Cytoplasm</location>
    </subcellularLocation>
</comment>
<comment type="similarity">
    <text evidence="1">Belongs to the prokaryotic pantothenate kinase family.</text>
</comment>
<reference key="1">
    <citation type="journal article" date="2005" name="Nucleic Acids Res.">
        <title>Genome dynamics and diversity of Shigella species, the etiologic agents of bacillary dysentery.</title>
        <authorList>
            <person name="Yang F."/>
            <person name="Yang J."/>
            <person name="Zhang X."/>
            <person name="Chen L."/>
            <person name="Jiang Y."/>
            <person name="Yan Y."/>
            <person name="Tang X."/>
            <person name="Wang J."/>
            <person name="Xiong Z."/>
            <person name="Dong J."/>
            <person name="Xue Y."/>
            <person name="Zhu Y."/>
            <person name="Xu X."/>
            <person name="Sun L."/>
            <person name="Chen S."/>
            <person name="Nie H."/>
            <person name="Peng J."/>
            <person name="Xu J."/>
            <person name="Wang Y."/>
            <person name="Yuan Z."/>
            <person name="Wen Y."/>
            <person name="Yao Z."/>
            <person name="Shen Y."/>
            <person name="Qiang B."/>
            <person name="Hou Y."/>
            <person name="Yu J."/>
            <person name="Jin Q."/>
        </authorList>
    </citation>
    <scope>NUCLEOTIDE SEQUENCE [LARGE SCALE GENOMIC DNA]</scope>
    <source>
        <strain>Ss046</strain>
    </source>
</reference>
<name>COAA_SHISS</name>
<gene>
    <name evidence="1" type="primary">coaA</name>
    <name type="ordered locus">SSON_4147</name>
</gene>
<protein>
    <recommendedName>
        <fullName evidence="1">Pantothenate kinase</fullName>
        <ecNumber evidence="1">2.7.1.33</ecNumber>
    </recommendedName>
    <alternativeName>
        <fullName evidence="1">Pantothenic acid kinase</fullName>
    </alternativeName>
</protein>
<keyword id="KW-0067">ATP-binding</keyword>
<keyword id="KW-0173">Coenzyme A biosynthesis</keyword>
<keyword id="KW-0963">Cytoplasm</keyword>
<keyword id="KW-0418">Kinase</keyword>
<keyword id="KW-0547">Nucleotide-binding</keyword>
<keyword id="KW-1185">Reference proteome</keyword>
<keyword id="KW-0808">Transferase</keyword>